<proteinExistence type="evidence at protein level"/>
<protein>
    <recommendedName>
        <fullName evidence="6">dTDP-4-dehydro-6-deoxyglucose 3-epimerase</fullName>
        <ecNumber evidence="2">5.1.3.27</ecNumber>
    </recommendedName>
    <alternativeName>
        <fullName evidence="6">dTDP-4-dehydro-6-deoxy-D-glucose 3-epimerase</fullName>
    </alternativeName>
    <alternativeName>
        <fullName evidence="6">dTDP-4-keto-6-deoxyglucose epimerase</fullName>
    </alternativeName>
    <alternativeName>
        <fullName evidence="6">dTDP-4-oxo-6-deoxy-D-glucose epimerase</fullName>
    </alternativeName>
</protein>
<name>CHMJ_STRBI</name>
<reference key="1">
    <citation type="journal article" date="2004" name="Antimicrob. Agents Chemother.">
        <title>Chalcomycin biosynthesis gene cluster from Streptomyces bikiniensis: novel features of an unusual ketolide produced through expression of the chm polyketide synthase in Streptomyces fradiae.</title>
        <authorList>
            <person name="Ward S.L."/>
            <person name="Hu Z."/>
            <person name="Schirmer A."/>
            <person name="Reid R."/>
            <person name="Revill W.P."/>
            <person name="Reeves C.D."/>
            <person name="Petrakovsky O.V."/>
            <person name="Dong S.D."/>
            <person name="Katz L."/>
        </authorList>
    </citation>
    <scope>NUCLEOTIDE SEQUENCE [GENOMIC DNA]</scope>
    <scope>FUNCTION</scope>
    <scope>PATHWAY</scope>
    <source>
        <strain>NRRL 2737</strain>
    </source>
</reference>
<reference key="2">
    <citation type="journal article" date="2012" name="Biochemistry">
        <title>Structural and functional studies on a 3'-epimerase involved in the biosynthesis of dTDP-6-deoxy-D-allose.</title>
        <authorList>
            <person name="Kubiak R.L."/>
            <person name="Phillips R.K."/>
            <person name="Zmudka M.W."/>
            <person name="Ahn M.R."/>
            <person name="Maka E.M."/>
            <person name="Pyeatt G.L."/>
            <person name="Roggensack S.J."/>
            <person name="Holden H.M."/>
        </authorList>
    </citation>
    <scope>X-RAY CRYSTALLOGRAPHY (1.60 ANGSTROMS) OF APOENZYME; COMPLEX WITH DTDP-QUINOVOSE AND MUTANT ASN-60/PHE-130 IN COMPLEX WITH DTDP</scope>
    <scope>FUNCTION</scope>
    <scope>CATALYTIC ACTIVITY</scope>
    <scope>BIOPHYSICOCHEMICAL PROPERTIES</scope>
    <scope>SUBUNIT</scope>
    <scope>ACTIVE SITES</scope>
    <scope>MUTAGENESIS OF HIS-60 AND TYR-130</scope>
    <source>
        <strain>NRRL 2737</strain>
    </source>
</reference>
<organism>
    <name type="scientific">Streptomyces bikiniensis</name>
    <dbReference type="NCBI Taxonomy" id="1896"/>
    <lineage>
        <taxon>Bacteria</taxon>
        <taxon>Bacillati</taxon>
        <taxon>Actinomycetota</taxon>
        <taxon>Actinomycetes</taxon>
        <taxon>Kitasatosporales</taxon>
        <taxon>Streptomycetaceae</taxon>
        <taxon>Streptomyces</taxon>
    </lineage>
</organism>
<feature type="chain" id="PRO_0000425106" description="dTDP-4-dehydro-6-deoxyglucose 3-epimerase">
    <location>
        <begin position="1"/>
        <end position="196"/>
    </location>
</feature>
<feature type="active site" description="Proton acceptor" evidence="6">
    <location>
        <position position="60"/>
    </location>
</feature>
<feature type="active site" description="Proton donor" evidence="6">
    <location>
        <position position="130"/>
    </location>
</feature>
<feature type="binding site" evidence="2 8">
    <location>
        <position position="21"/>
    </location>
    <ligand>
        <name>substrate</name>
    </ligand>
</feature>
<feature type="binding site" evidence="2 8">
    <location>
        <position position="26"/>
    </location>
    <ligand>
        <name>substrate</name>
    </ligand>
</feature>
<feature type="binding site" evidence="2 7 8">
    <location>
        <begin position="45"/>
        <end position="47"/>
    </location>
    <ligand>
        <name>substrate</name>
    </ligand>
</feature>
<feature type="binding site" evidence="2 8">
    <location>
        <position position="57"/>
    </location>
    <ligand>
        <name>substrate</name>
    </ligand>
</feature>
<feature type="binding site" evidence="2 8">
    <location>
        <position position="70"/>
    </location>
    <ligand>
        <name>substrate</name>
    </ligand>
</feature>
<feature type="binding site" evidence="2 8">
    <location>
        <position position="117"/>
    </location>
    <ligand>
        <name>substrate</name>
    </ligand>
</feature>
<feature type="binding site" evidence="2 8">
    <location>
        <position position="141"/>
    </location>
    <ligand>
        <name>substrate</name>
    </ligand>
</feature>
<feature type="binding site" evidence="1">
    <location>
        <position position="166"/>
    </location>
    <ligand>
        <name>substrate</name>
    </ligand>
</feature>
<feature type="site" description="Participates in a stacking interaction with the thymidine ring of dTDP-4-oxo-6-deoxyglucose" evidence="2 8">
    <location>
        <position position="136"/>
    </location>
</feature>
<feature type="mutagenesis site" description="No effect on substrate affinity, but 2400-fold reduction in activity." evidence="2">
    <original>H</original>
    <variation>N</variation>
    <location>
        <position position="60"/>
    </location>
</feature>
<feature type="mutagenesis site" description="Slight decrease in substrate affinity, and 1650-fold reduction in activity." evidence="2">
    <original>Y</original>
    <variation>F</variation>
    <location>
        <position position="130"/>
    </location>
</feature>
<feature type="strand" evidence="9">
    <location>
        <begin position="9"/>
        <end position="12"/>
    </location>
</feature>
<feature type="strand" evidence="9">
    <location>
        <begin position="16"/>
        <end position="19"/>
    </location>
</feature>
<feature type="strand" evidence="9">
    <location>
        <begin position="22"/>
        <end position="29"/>
    </location>
</feature>
<feature type="helix" evidence="9">
    <location>
        <begin position="30"/>
        <end position="37"/>
    </location>
</feature>
<feature type="strand" evidence="9">
    <location>
        <begin position="45"/>
        <end position="51"/>
    </location>
</feature>
<feature type="strand" evidence="9">
    <location>
        <begin position="55"/>
        <end position="62"/>
    </location>
</feature>
<feature type="strand" evidence="9">
    <location>
        <begin position="64"/>
        <end position="66"/>
    </location>
</feature>
<feature type="strand" evidence="9">
    <location>
        <begin position="70"/>
        <end position="84"/>
    </location>
</feature>
<feature type="turn" evidence="9">
    <location>
        <begin position="91"/>
        <end position="94"/>
    </location>
</feature>
<feature type="strand" evidence="9">
    <location>
        <begin position="96"/>
        <end position="102"/>
    </location>
</feature>
<feature type="turn" evidence="9">
    <location>
        <begin position="103"/>
        <end position="105"/>
    </location>
</feature>
<feature type="strand" evidence="9">
    <location>
        <begin position="108"/>
        <end position="111"/>
    </location>
</feature>
<feature type="strand" evidence="9">
    <location>
        <begin position="116"/>
        <end position="121"/>
    </location>
</feature>
<feature type="strand" evidence="9">
    <location>
        <begin position="126"/>
        <end position="134"/>
    </location>
</feature>
<feature type="helix" evidence="9">
    <location>
        <begin position="138"/>
        <end position="140"/>
    </location>
</feature>
<feature type="strand" evidence="9">
    <location>
        <begin position="141"/>
        <end position="143"/>
    </location>
</feature>
<feature type="turn" evidence="9">
    <location>
        <begin position="149"/>
        <end position="151"/>
    </location>
</feature>
<feature type="helix" evidence="9">
    <location>
        <begin position="165"/>
        <end position="168"/>
    </location>
</feature>
<feature type="helix" evidence="9">
    <location>
        <begin position="173"/>
        <end position="178"/>
    </location>
</feature>
<feature type="helix" evidence="9">
    <location>
        <begin position="185"/>
        <end position="196"/>
    </location>
</feature>
<keyword id="KW-0002">3D-structure</keyword>
<keyword id="KW-0045">Antibiotic biosynthesis</keyword>
<keyword id="KW-0119">Carbohydrate metabolism</keyword>
<keyword id="KW-0413">Isomerase</keyword>
<dbReference type="EC" id="5.1.3.27" evidence="2"/>
<dbReference type="EMBL" id="AY509120">
    <property type="protein sequence ID" value="AAS79451.1"/>
    <property type="molecule type" value="Genomic_DNA"/>
</dbReference>
<dbReference type="PDB" id="4HMZ">
    <property type="method" value="X-ray"/>
    <property type="resolution" value="2.00 A"/>
    <property type="chains" value="A/B/C/D=1-196"/>
</dbReference>
<dbReference type="PDB" id="4HN0">
    <property type="method" value="X-ray"/>
    <property type="resolution" value="2.20 A"/>
    <property type="chains" value="A/B/C/D=1-196"/>
</dbReference>
<dbReference type="PDB" id="4HN1">
    <property type="method" value="X-ray"/>
    <property type="resolution" value="1.60 A"/>
    <property type="chains" value="A/B/C/D=1-196"/>
</dbReference>
<dbReference type="PDBsum" id="4HMZ"/>
<dbReference type="PDBsum" id="4HN0"/>
<dbReference type="PDBsum" id="4HN1"/>
<dbReference type="SMR" id="Q5SFD1"/>
<dbReference type="EvolutionaryTrace" id="Q5SFD1"/>
<dbReference type="GO" id="GO:0005829">
    <property type="term" value="C:cytosol"/>
    <property type="evidence" value="ECO:0007669"/>
    <property type="project" value="TreeGrafter"/>
</dbReference>
<dbReference type="GO" id="GO:0008830">
    <property type="term" value="F:dTDP-4-dehydrorhamnose 3,5-epimerase activity"/>
    <property type="evidence" value="ECO:0007669"/>
    <property type="project" value="InterPro"/>
</dbReference>
<dbReference type="GO" id="GO:0017000">
    <property type="term" value="P:antibiotic biosynthetic process"/>
    <property type="evidence" value="ECO:0007669"/>
    <property type="project" value="UniProtKB-KW"/>
</dbReference>
<dbReference type="GO" id="GO:0019305">
    <property type="term" value="P:dTDP-rhamnose biosynthetic process"/>
    <property type="evidence" value="ECO:0007669"/>
    <property type="project" value="TreeGrafter"/>
</dbReference>
<dbReference type="GO" id="GO:0000271">
    <property type="term" value="P:polysaccharide biosynthetic process"/>
    <property type="evidence" value="ECO:0007669"/>
    <property type="project" value="TreeGrafter"/>
</dbReference>
<dbReference type="CDD" id="cd00438">
    <property type="entry name" value="cupin_RmlC"/>
    <property type="match status" value="1"/>
</dbReference>
<dbReference type="Gene3D" id="2.60.120.10">
    <property type="entry name" value="Jelly Rolls"/>
    <property type="match status" value="1"/>
</dbReference>
<dbReference type="InterPro" id="IPR000888">
    <property type="entry name" value="RmlC-like"/>
</dbReference>
<dbReference type="InterPro" id="IPR014710">
    <property type="entry name" value="RmlC-like_jellyroll"/>
</dbReference>
<dbReference type="InterPro" id="IPR011051">
    <property type="entry name" value="RmlC_Cupin_sf"/>
</dbReference>
<dbReference type="PANTHER" id="PTHR21047">
    <property type="entry name" value="DTDP-6-DEOXY-D-GLUCOSE-3,5 EPIMERASE"/>
    <property type="match status" value="1"/>
</dbReference>
<dbReference type="PANTHER" id="PTHR21047:SF2">
    <property type="entry name" value="THYMIDINE DIPHOSPHO-4-KETO-RHAMNOSE 3,5-EPIMERASE"/>
    <property type="match status" value="1"/>
</dbReference>
<dbReference type="Pfam" id="PF00908">
    <property type="entry name" value="dTDP_sugar_isom"/>
    <property type="match status" value="1"/>
</dbReference>
<dbReference type="SUPFAM" id="SSF51182">
    <property type="entry name" value="RmlC-like cupins"/>
    <property type="match status" value="1"/>
</dbReference>
<accession>Q5SFD1</accession>
<comment type="function">
    <text evidence="2 5">Involved in the biosynthesis of dTDP-6-deoxy-D-allose, an intermediate in the biosynthesis of mycinose, which is one of the two unusual sugars attached to the 16-membered macrolactone ring of the aglycone antibiotic chalcomycin. Catalyzes the conversion of dTDP-4-oxo-6-deoxyglucose to dTDP-4-oxo-6-deoxyallose, via a C-3 epimerization.</text>
</comment>
<comment type="catalytic activity">
    <reaction evidence="2">
        <text>dTDP-4-dehydro-6-deoxy-alpha-D-glucose = dTDP-4-dehydro-6-deoxy-alpha-D-allose</text>
        <dbReference type="Rhea" id="RHEA:36971"/>
        <dbReference type="ChEBI" id="CHEBI:57649"/>
        <dbReference type="ChEBI" id="CHEBI:76253"/>
        <dbReference type="EC" id="5.1.3.27"/>
    </reaction>
</comment>
<comment type="biophysicochemical properties">
    <kinetics>
        <KM evidence="2">0.4 mM for dTDP-4-dehydro-6-deoxy-alpha-D-glucose</KM>
        <text evidence="2">kcat is 6.4 sec(-1).</text>
    </kinetics>
</comment>
<comment type="pathway">
    <text evidence="5">Antibiotic biosynthesis.</text>
</comment>
<comment type="subunit">
    <text evidence="2">Homodimer.</text>
</comment>
<comment type="similarity">
    <text evidence="4">Belongs to the dTDP-4-dehydrorhamnose 3,5-epimerase family.</text>
</comment>
<gene>
    <name evidence="3" type="primary">chmJ</name>
</gene>
<sequence length="196" mass="21683">MHPLSIEGAWSQEPVIHSDHRGRSHEWFRGESFRQAFGHDFPVAQVNVAVSHRGALRGIHYTEIPPGQAKYSVCVRGAGLDVVVDVRIGSPTFGRWEIVPMDAERNTAVYLTAGLGRAFLSLTDDATLVYLCSSGYAPAREHSVNPLDPDLGIAWPDDIEPLLSDRDENAPTLATAERLGLLPTYQAWQEQQQAQR</sequence>
<evidence type="ECO:0000250" key="1">
    <source>
        <dbReference type="UniProtKB" id="Q9HU21"/>
    </source>
</evidence>
<evidence type="ECO:0000269" key="2">
    <source>
    </source>
</evidence>
<evidence type="ECO:0000303" key="3">
    <source>
    </source>
</evidence>
<evidence type="ECO:0000305" key="4"/>
<evidence type="ECO:0000305" key="5">
    <source>
    </source>
</evidence>
<evidence type="ECO:0000305" key="6">
    <source>
    </source>
</evidence>
<evidence type="ECO:0007744" key="7">
    <source>
        <dbReference type="PDB" id="4HMZ"/>
    </source>
</evidence>
<evidence type="ECO:0007744" key="8">
    <source>
        <dbReference type="PDB" id="4HN1"/>
    </source>
</evidence>
<evidence type="ECO:0007829" key="9">
    <source>
        <dbReference type="PDB" id="4HN1"/>
    </source>
</evidence>